<keyword id="KW-1015">Disulfide bond</keyword>
<keyword id="KW-0325">Glycoprotein</keyword>
<keyword id="KW-1185">Reference proteome</keyword>
<keyword id="KW-0964">Secreted</keyword>
<keyword id="KW-0732">Signal</keyword>
<feature type="signal peptide" evidence="1">
    <location>
        <begin position="1"/>
        <end position="23"/>
    </location>
</feature>
<feature type="chain" id="PRO_0000020997" description="Corticotropin-releasing factor-binding protein">
    <location>
        <begin position="24"/>
        <end position="324"/>
    </location>
</feature>
<feature type="glycosylation site" description="N-linked (GlcNAc...) asparagine" evidence="2">
    <location>
        <position position="206"/>
    </location>
</feature>
<feature type="disulfide bond" evidence="1">
    <location>
        <begin position="62"/>
        <end position="83"/>
    </location>
</feature>
<feature type="disulfide bond" evidence="1">
    <location>
        <begin position="106"/>
        <end position="143"/>
    </location>
</feature>
<feature type="disulfide bond" evidence="1">
    <location>
        <begin position="185"/>
        <end position="207"/>
    </location>
</feature>
<feature type="disulfide bond" evidence="1">
    <location>
        <begin position="239"/>
        <end position="266"/>
    </location>
</feature>
<feature type="disulfide bond" evidence="1">
    <location>
        <begin position="279"/>
        <end position="320"/>
    </location>
</feature>
<comment type="function">
    <text>Binds CRF and inactivates it. May prevent inappropriate pituitary-adrenal stimulation in pregnancy.</text>
</comment>
<comment type="subcellular location">
    <subcellularLocation>
        <location evidence="1">Secreted</location>
    </subcellularLocation>
</comment>
<comment type="similarity">
    <text evidence="3">Belongs to the CRF-binding protein family.</text>
</comment>
<evidence type="ECO:0000250" key="1"/>
<evidence type="ECO:0000255" key="2"/>
<evidence type="ECO:0000305" key="3"/>
<sequence length="324" mass="36387">MAPTLKLQCHFILVCLLALRGESRYLELREAVDHDPFPHLAGGASPKRELEGEPLYRRALRCVDMLSLQGQFTFTADRRQLHCATFFIAEPEEFITIHYDLVSIDCLRGDILQVFDGWILKGEKFPSSQDHPLPTTERYVDFCDSGLSRRSIRSSQNVAMIFFRVHEPGNGFTITVKTEPNLFPCNIISQTPNGRFTLVMPHQHRNCSFSIIYPVAIKISDLTLGHLNGLQLKKSSAGCGGIGDFVELLGGTGLDPSKMLLLADLCYPLRGPAQMKVGCDHTVLRMVSSGKHINRVTFEYRQLEPYELENPNGNSIQEFCLSTL</sequence>
<accession>Q28557</accession>
<organism>
    <name type="scientific">Ovis aries</name>
    <name type="common">Sheep</name>
    <dbReference type="NCBI Taxonomy" id="9940"/>
    <lineage>
        <taxon>Eukaryota</taxon>
        <taxon>Metazoa</taxon>
        <taxon>Chordata</taxon>
        <taxon>Craniata</taxon>
        <taxon>Vertebrata</taxon>
        <taxon>Euteleostomi</taxon>
        <taxon>Mammalia</taxon>
        <taxon>Eutheria</taxon>
        <taxon>Laurasiatheria</taxon>
        <taxon>Artiodactyla</taxon>
        <taxon>Ruminantia</taxon>
        <taxon>Pecora</taxon>
        <taxon>Bovidae</taxon>
        <taxon>Caprinae</taxon>
        <taxon>Ovis</taxon>
    </lineage>
</organism>
<protein>
    <recommendedName>
        <fullName>Corticotropin-releasing factor-binding protein</fullName>
        <shortName>CRF-BP</shortName>
        <shortName>CRF-binding protein</shortName>
    </recommendedName>
    <alternativeName>
        <fullName>Corticotropin-releasing hormone-binding protein</fullName>
        <shortName>CRH-BP</shortName>
    </alternativeName>
</protein>
<dbReference type="EMBL" id="U51199">
    <property type="protein sequence ID" value="AAC48545.1"/>
    <property type="molecule type" value="mRNA"/>
</dbReference>
<dbReference type="RefSeq" id="NP_001009339.1">
    <property type="nucleotide sequence ID" value="NM_001009339.1"/>
</dbReference>
<dbReference type="STRING" id="9940.ENSOARP00000018214"/>
<dbReference type="GlyCosmos" id="Q28557">
    <property type="glycosylation" value="1 site, No reported glycans"/>
</dbReference>
<dbReference type="GeneID" id="443354"/>
<dbReference type="KEGG" id="oas:443354"/>
<dbReference type="CTD" id="1393"/>
<dbReference type="OrthoDB" id="10056927at2759"/>
<dbReference type="Proteomes" id="UP000002356">
    <property type="component" value="Unplaced"/>
</dbReference>
<dbReference type="GO" id="GO:0043679">
    <property type="term" value="C:axon terminus"/>
    <property type="evidence" value="ECO:0000250"/>
    <property type="project" value="UniProtKB"/>
</dbReference>
<dbReference type="GO" id="GO:0030425">
    <property type="term" value="C:dendrite"/>
    <property type="evidence" value="ECO:0000250"/>
    <property type="project" value="UniProtKB"/>
</dbReference>
<dbReference type="GO" id="GO:0031045">
    <property type="term" value="C:dense core granule"/>
    <property type="evidence" value="ECO:0000250"/>
    <property type="project" value="UniProtKB"/>
</dbReference>
<dbReference type="GO" id="GO:0005615">
    <property type="term" value="C:extracellular space"/>
    <property type="evidence" value="ECO:0000250"/>
    <property type="project" value="UniProtKB"/>
</dbReference>
<dbReference type="GO" id="GO:0005874">
    <property type="term" value="C:microtubule"/>
    <property type="evidence" value="ECO:0000250"/>
    <property type="project" value="UniProtKB"/>
</dbReference>
<dbReference type="GO" id="GO:0005771">
    <property type="term" value="C:multivesicular body"/>
    <property type="evidence" value="ECO:0000250"/>
    <property type="project" value="UniProtKB"/>
</dbReference>
<dbReference type="GO" id="GO:0005634">
    <property type="term" value="C:nucleus"/>
    <property type="evidence" value="ECO:0000250"/>
    <property type="project" value="UniProtKB"/>
</dbReference>
<dbReference type="GO" id="GO:0043204">
    <property type="term" value="C:perikaryon"/>
    <property type="evidence" value="ECO:0000250"/>
    <property type="project" value="UniProtKB"/>
</dbReference>
<dbReference type="GO" id="GO:0005767">
    <property type="term" value="C:secondary lysosome"/>
    <property type="evidence" value="ECO:0000250"/>
    <property type="project" value="UniProtKB"/>
</dbReference>
<dbReference type="GO" id="GO:0030141">
    <property type="term" value="C:secretory granule"/>
    <property type="evidence" value="ECO:0000250"/>
    <property type="project" value="UniProtKB"/>
</dbReference>
<dbReference type="GO" id="GO:0043196">
    <property type="term" value="C:varicosity"/>
    <property type="evidence" value="ECO:0000250"/>
    <property type="project" value="UniProtKB"/>
</dbReference>
<dbReference type="GO" id="GO:0051424">
    <property type="term" value="F:corticotropin-releasing hormone binding"/>
    <property type="evidence" value="ECO:0000250"/>
    <property type="project" value="UniProtKB"/>
</dbReference>
<dbReference type="GO" id="GO:0042277">
    <property type="term" value="F:peptide binding"/>
    <property type="evidence" value="ECO:0000250"/>
    <property type="project" value="UniProtKB"/>
</dbReference>
<dbReference type="GO" id="GO:0048149">
    <property type="term" value="P:behavioral response to ethanol"/>
    <property type="evidence" value="ECO:0000250"/>
    <property type="project" value="UniProtKB"/>
</dbReference>
<dbReference type="GO" id="GO:0071277">
    <property type="term" value="P:cellular response to calcium ion"/>
    <property type="evidence" value="ECO:0000250"/>
    <property type="project" value="UniProtKB"/>
</dbReference>
<dbReference type="GO" id="GO:0071320">
    <property type="term" value="P:cellular response to cAMP"/>
    <property type="evidence" value="ECO:0000250"/>
    <property type="project" value="UniProtKB"/>
</dbReference>
<dbReference type="GO" id="GO:0071314">
    <property type="term" value="P:cellular response to cocaine"/>
    <property type="evidence" value="ECO:0000250"/>
    <property type="project" value="UniProtKB"/>
</dbReference>
<dbReference type="GO" id="GO:0071392">
    <property type="term" value="P:cellular response to estradiol stimulus"/>
    <property type="evidence" value="ECO:0000250"/>
    <property type="project" value="UniProtKB"/>
</dbReference>
<dbReference type="GO" id="GO:0071391">
    <property type="term" value="P:cellular response to estrogen stimulus"/>
    <property type="evidence" value="ECO:0000250"/>
    <property type="project" value="UniProtKB"/>
</dbReference>
<dbReference type="GO" id="GO:0097211">
    <property type="term" value="P:cellular response to gonadotropin-releasing hormone"/>
    <property type="evidence" value="ECO:0000250"/>
    <property type="project" value="UniProtKB"/>
</dbReference>
<dbReference type="GO" id="GO:0035903">
    <property type="term" value="P:cellular response to immobilization stress"/>
    <property type="evidence" value="ECO:0000250"/>
    <property type="project" value="UniProtKB"/>
</dbReference>
<dbReference type="GO" id="GO:0035865">
    <property type="term" value="P:cellular response to potassium ion"/>
    <property type="evidence" value="ECO:0000250"/>
    <property type="project" value="UniProtKB"/>
</dbReference>
<dbReference type="GO" id="GO:0071356">
    <property type="term" value="P:cellular response to tumor necrosis factor"/>
    <property type="evidence" value="ECO:0000250"/>
    <property type="project" value="UniProtKB"/>
</dbReference>
<dbReference type="GO" id="GO:0071466">
    <property type="term" value="P:cellular response to xenobiotic stimulus"/>
    <property type="evidence" value="ECO:0000250"/>
    <property type="project" value="UniProtKB"/>
</dbReference>
<dbReference type="GO" id="GO:0007565">
    <property type="term" value="P:female pregnancy"/>
    <property type="evidence" value="ECO:0000250"/>
    <property type="project" value="UniProtKB"/>
</dbReference>
<dbReference type="GO" id="GO:0009755">
    <property type="term" value="P:hormone-mediated signaling pathway"/>
    <property type="evidence" value="ECO:0000250"/>
    <property type="project" value="UniProtKB"/>
</dbReference>
<dbReference type="GO" id="GO:0006954">
    <property type="term" value="P:inflammatory response"/>
    <property type="evidence" value="ECO:0000250"/>
    <property type="project" value="UniProtKB"/>
</dbReference>
<dbReference type="GO" id="GO:0002125">
    <property type="term" value="P:maternal aggressive behavior"/>
    <property type="evidence" value="ECO:0000250"/>
    <property type="project" value="UniProtKB"/>
</dbReference>
<dbReference type="GO" id="GO:0051460">
    <property type="term" value="P:negative regulation of corticotropin secretion"/>
    <property type="evidence" value="ECO:0000250"/>
    <property type="project" value="UniProtKB"/>
</dbReference>
<dbReference type="GO" id="GO:1900011">
    <property type="term" value="P:negative regulation of corticotropin-releasing hormone receptor activity"/>
    <property type="evidence" value="ECO:0000250"/>
    <property type="project" value="UniProtKB"/>
</dbReference>
<dbReference type="GO" id="GO:0045055">
    <property type="term" value="P:regulated exocytosis"/>
    <property type="evidence" value="ECO:0000250"/>
    <property type="project" value="UniProtKB"/>
</dbReference>
<dbReference type="GO" id="GO:0080135">
    <property type="term" value="P:regulation of cellular response to stress"/>
    <property type="evidence" value="ECO:0000250"/>
    <property type="project" value="UniProtKB"/>
</dbReference>
<dbReference type="GO" id="GO:0051459">
    <property type="term" value="P:regulation of corticotropin secretion"/>
    <property type="evidence" value="ECO:0000250"/>
    <property type="project" value="UniProtKB"/>
</dbReference>
<dbReference type="GO" id="GO:2000310">
    <property type="term" value="P:regulation of NMDA receptor activity"/>
    <property type="evidence" value="ECO:0000250"/>
    <property type="project" value="UniProtKB"/>
</dbReference>
<dbReference type="GO" id="GO:0001963">
    <property type="term" value="P:synaptic transmission, dopaminergic"/>
    <property type="evidence" value="ECO:0000250"/>
    <property type="project" value="UniProtKB"/>
</dbReference>
<dbReference type="InterPro" id="IPR008435">
    <property type="entry name" value="CRF-bd"/>
</dbReference>
<dbReference type="InterPro" id="IPR056178">
    <property type="entry name" value="CRF-BP_C"/>
</dbReference>
<dbReference type="InterPro" id="IPR056177">
    <property type="entry name" value="CRF-BP_N"/>
</dbReference>
<dbReference type="InterPro" id="IPR035914">
    <property type="entry name" value="Sperma_CUB_dom_sf"/>
</dbReference>
<dbReference type="PANTHER" id="PTHR10278">
    <property type="entry name" value="CORTICOTROPIN-RELEASING FACTOR-BINDING PROTEIN"/>
    <property type="match status" value="1"/>
</dbReference>
<dbReference type="PANTHER" id="PTHR10278:SF0">
    <property type="entry name" value="CORTICOTROPIN-RELEASING FACTOR-BINDING PROTEIN"/>
    <property type="match status" value="1"/>
</dbReference>
<dbReference type="Pfam" id="PF23541">
    <property type="entry name" value="CRF-BP_C"/>
    <property type="match status" value="1"/>
</dbReference>
<dbReference type="Pfam" id="PF05428">
    <property type="entry name" value="CRF-BP_N"/>
    <property type="match status" value="1"/>
</dbReference>
<dbReference type="PIRSF" id="PIRSF009279">
    <property type="entry name" value="CRF_bd"/>
    <property type="match status" value="1"/>
</dbReference>
<dbReference type="SUPFAM" id="SSF49854">
    <property type="entry name" value="Spermadhesin, CUB domain"/>
    <property type="match status" value="1"/>
</dbReference>
<name>CRHBP_SHEEP</name>
<gene>
    <name type="primary">CRHBP</name>
</gene>
<proteinExistence type="evidence at transcript level"/>
<reference key="1">
    <citation type="journal article" date="1996" name="Brain Res.">
        <title>Characterization of a sheep brain corticotropin releasing factor binding protein.</title>
        <authorList>
            <person name="Behan D.P."/>
            <person name="Cepoi D."/>
            <person name="Fischer W.H."/>
            <person name="Park M."/>
            <person name="Sutton S."/>
            <person name="Lowry P.J."/>
            <person name="Vale W."/>
        </authorList>
    </citation>
    <scope>NUCLEOTIDE SEQUENCE [MRNA]</scope>
    <source>
        <tissue>Brain</tissue>
    </source>
</reference>
<reference key="2">
    <citation type="journal article" date="1996" name="Brain Res.">
        <authorList>
            <person name="Behan D.P."/>
            <person name="Cepoi D."/>
            <person name="Fischer W.H."/>
            <person name="Park M."/>
            <person name="Sutton S."/>
            <person name="Lowry P.J."/>
            <person name="Vale W."/>
        </authorList>
    </citation>
    <scope>ERRATUM OF PUBMED:8833763</scope>
</reference>